<evidence type="ECO:0000255" key="1">
    <source>
        <dbReference type="HAMAP-Rule" id="MF_01317"/>
    </source>
</evidence>
<evidence type="ECO:0000305" key="2"/>
<keyword id="KW-0472">Membrane</keyword>
<keyword id="KW-0602">Photosynthesis</keyword>
<keyword id="KW-0604">Photosystem II</keyword>
<keyword id="KW-0674">Reaction center</keyword>
<keyword id="KW-1185">Reference proteome</keyword>
<keyword id="KW-0793">Thylakoid</keyword>
<keyword id="KW-0812">Transmembrane</keyword>
<keyword id="KW-1133">Transmembrane helix</keyword>
<organism>
    <name type="scientific">Prochlorococcus marinus (strain NATL2A)</name>
    <dbReference type="NCBI Taxonomy" id="59920"/>
    <lineage>
        <taxon>Bacteria</taxon>
        <taxon>Bacillati</taxon>
        <taxon>Cyanobacteriota</taxon>
        <taxon>Cyanophyceae</taxon>
        <taxon>Synechococcales</taxon>
        <taxon>Prochlorococcaceae</taxon>
        <taxon>Prochlorococcus</taxon>
    </lineage>
</organism>
<dbReference type="EMBL" id="CP000095">
    <property type="protein sequence ID" value="AAZ59152.1"/>
    <property type="molecule type" value="Genomic_DNA"/>
</dbReference>
<dbReference type="RefSeq" id="WP_011294297.1">
    <property type="nucleotide sequence ID" value="NC_007335.2"/>
</dbReference>
<dbReference type="SMR" id="Q46H80"/>
<dbReference type="STRING" id="59920.PMN2A_1664"/>
<dbReference type="KEGG" id="pmn:PMN2A_1664"/>
<dbReference type="HOGENOM" id="CLU_214425_0_0_3"/>
<dbReference type="OrthoDB" id="560356at2"/>
<dbReference type="PhylomeDB" id="Q46H80"/>
<dbReference type="Proteomes" id="UP000002535">
    <property type="component" value="Chromosome"/>
</dbReference>
<dbReference type="GO" id="GO:0009539">
    <property type="term" value="C:photosystem II reaction center"/>
    <property type="evidence" value="ECO:0007669"/>
    <property type="project" value="InterPro"/>
</dbReference>
<dbReference type="GO" id="GO:0031676">
    <property type="term" value="C:plasma membrane-derived thylakoid membrane"/>
    <property type="evidence" value="ECO:0007669"/>
    <property type="project" value="UniProtKB-SubCell"/>
</dbReference>
<dbReference type="GO" id="GO:0015979">
    <property type="term" value="P:photosynthesis"/>
    <property type="evidence" value="ECO:0007669"/>
    <property type="project" value="UniProtKB-UniRule"/>
</dbReference>
<dbReference type="HAMAP" id="MF_01317">
    <property type="entry name" value="PSII_PsbL"/>
    <property type="match status" value="1"/>
</dbReference>
<dbReference type="InterPro" id="IPR003372">
    <property type="entry name" value="PSII_PsbL"/>
</dbReference>
<dbReference type="InterPro" id="IPR037266">
    <property type="entry name" value="PSII_PsbL_sf"/>
</dbReference>
<dbReference type="NCBIfam" id="NF001972">
    <property type="entry name" value="PRK00753.1"/>
    <property type="match status" value="1"/>
</dbReference>
<dbReference type="Pfam" id="PF02419">
    <property type="entry name" value="PsbL"/>
    <property type="match status" value="1"/>
</dbReference>
<dbReference type="SUPFAM" id="SSF161017">
    <property type="entry name" value="Photosystem II reaction center protein L, PsbL"/>
    <property type="match status" value="1"/>
</dbReference>
<name>PSBL_PROMT</name>
<proteinExistence type="inferred from homology"/>
<reference key="1">
    <citation type="journal article" date="2007" name="PLoS Genet.">
        <title>Patterns and implications of gene gain and loss in the evolution of Prochlorococcus.</title>
        <authorList>
            <person name="Kettler G.C."/>
            <person name="Martiny A.C."/>
            <person name="Huang K."/>
            <person name="Zucker J."/>
            <person name="Coleman M.L."/>
            <person name="Rodrigue S."/>
            <person name="Chen F."/>
            <person name="Lapidus A."/>
            <person name="Ferriera S."/>
            <person name="Johnson J."/>
            <person name="Steglich C."/>
            <person name="Church G.M."/>
            <person name="Richardson P."/>
            <person name="Chisholm S.W."/>
        </authorList>
    </citation>
    <scope>NUCLEOTIDE SEQUENCE [LARGE SCALE GENOMIC DNA]</scope>
    <source>
        <strain>NATL2A</strain>
    </source>
</reference>
<comment type="function">
    <text evidence="1">One of the components of the core complex of photosystem II (PSII). PSII is a light-driven water:plastoquinone oxidoreductase that uses light energy to abstract electrons from H(2)O, generating O(2) and a proton gradient subsequently used for ATP formation. It consists of a core antenna complex that captures photons, and an electron transfer chain that converts photonic excitation into a charge separation. This subunit is found at the monomer-monomer interface and is required for correct PSII assembly and/or dimerization.</text>
</comment>
<comment type="subunit">
    <text evidence="2">PSII is composed of 1 copy each of membrane proteins PsbA, PsbB, PsbC, PsbD, PsbE, PsbF, PsbH, PsbI, PsbJ, PsbK, PsbL, PsbM, PsbT, PsbX, PsbY, Psb30/Ycf12, peripheral proteins PsbO, CyanoQ (PsbQ), PsbU, PsbV and a large number of cofactors. It forms dimeric complexes.</text>
</comment>
<comment type="subcellular location">
    <subcellularLocation>
        <location evidence="1">Cellular thylakoid membrane</location>
        <topology evidence="1">Single-pass membrane protein</topology>
    </subcellularLocation>
</comment>
<comment type="similarity">
    <text evidence="1">Belongs to the PsbL family.</text>
</comment>
<feature type="chain" id="PRO_0000306209" description="Photosystem II reaction center protein L">
    <location>
        <begin position="1"/>
        <end position="39"/>
    </location>
</feature>
<feature type="transmembrane region" description="Helical" evidence="1">
    <location>
        <begin position="18"/>
        <end position="38"/>
    </location>
</feature>
<gene>
    <name evidence="1" type="primary">psbL</name>
    <name type="ordered locus">PMN2A_1664</name>
</gene>
<accession>Q46H80</accession>
<protein>
    <recommendedName>
        <fullName evidence="1">Photosystem II reaction center protein L</fullName>
        <shortName evidence="1">PSII-L</shortName>
    </recommendedName>
</protein>
<sequence>MQVNPNPNKVPVELNRTSLYLGLLLVFVMGILFSSYFFN</sequence>